<keyword id="KW-1185">Reference proteome</keyword>
<keyword id="KW-0964">Secreted</keyword>
<keyword id="KW-0732">Signal</keyword>
<reference key="1">
    <citation type="journal article" date="2003" name="Science">
        <title>In-depth view of structure, activity, and evolution of rice chromosome 10.</title>
        <authorList>
            <person name="Yu Y."/>
            <person name="Rambo T."/>
            <person name="Currie J."/>
            <person name="Saski C."/>
            <person name="Kim H.-R."/>
            <person name="Collura K."/>
            <person name="Thompson S."/>
            <person name="Simmons J."/>
            <person name="Yang T.-J."/>
            <person name="Nah G."/>
            <person name="Patel A.J."/>
            <person name="Thurmond S."/>
            <person name="Henry D."/>
            <person name="Oates R."/>
            <person name="Palmer M."/>
            <person name="Pries G."/>
            <person name="Gibson J."/>
            <person name="Anderson H."/>
            <person name="Paradkar M."/>
            <person name="Crane L."/>
            <person name="Dale J."/>
            <person name="Carver M.B."/>
            <person name="Wood T."/>
            <person name="Frisch D."/>
            <person name="Engler F."/>
            <person name="Soderlund C."/>
            <person name="Palmer L.E."/>
            <person name="Teytelman L."/>
            <person name="Nascimento L."/>
            <person name="De la Bastide M."/>
            <person name="Spiegel L."/>
            <person name="Ware D."/>
            <person name="O'Shaughnessy A."/>
            <person name="Dike S."/>
            <person name="Dedhia N."/>
            <person name="Preston R."/>
            <person name="Huang E."/>
            <person name="Ferraro K."/>
            <person name="Kuit K."/>
            <person name="Miller B."/>
            <person name="Zutavern T."/>
            <person name="Katzenberger F."/>
            <person name="Muller S."/>
            <person name="Balija V."/>
            <person name="Martienssen R.A."/>
            <person name="Stein L."/>
            <person name="Minx P."/>
            <person name="Johnson D."/>
            <person name="Cordum H."/>
            <person name="Mardis E."/>
            <person name="Cheng Z."/>
            <person name="Jiang J."/>
            <person name="Wilson R."/>
            <person name="McCombie W.R."/>
            <person name="Wing R.A."/>
            <person name="Yuan Q."/>
            <person name="Ouyang S."/>
            <person name="Liu J."/>
            <person name="Jones K.M."/>
            <person name="Gansberger K."/>
            <person name="Moffat K."/>
            <person name="Hill J."/>
            <person name="Tsitrin T."/>
            <person name="Overton L."/>
            <person name="Bera J."/>
            <person name="Kim M."/>
            <person name="Jin S."/>
            <person name="Tallon L."/>
            <person name="Ciecko A."/>
            <person name="Pai G."/>
            <person name="Van Aken S."/>
            <person name="Utterback T."/>
            <person name="Reidmuller S."/>
            <person name="Bormann J."/>
            <person name="Feldblyum T."/>
            <person name="Hsiao J."/>
            <person name="Zismann V."/>
            <person name="Blunt S."/>
            <person name="de Vazeille A.R."/>
            <person name="Shaffer T."/>
            <person name="Koo H."/>
            <person name="Suh B."/>
            <person name="Yang Q."/>
            <person name="Haas B."/>
            <person name="Peterson J."/>
            <person name="Pertea M."/>
            <person name="Volfovsky N."/>
            <person name="Wortman J."/>
            <person name="White O."/>
            <person name="Salzberg S.L."/>
            <person name="Fraser C.M."/>
            <person name="Buell C.R."/>
            <person name="Messing J."/>
            <person name="Song R."/>
            <person name="Fuks G."/>
            <person name="Llaca V."/>
            <person name="Kovchak S."/>
            <person name="Young S."/>
            <person name="Bowers J.E."/>
            <person name="Paterson A.H."/>
            <person name="Johns M.A."/>
            <person name="Mao L."/>
            <person name="Pan H."/>
            <person name="Dean R.A."/>
        </authorList>
    </citation>
    <scope>NUCLEOTIDE SEQUENCE [LARGE SCALE GENOMIC DNA]</scope>
    <source>
        <strain>cv. Nipponbare</strain>
    </source>
</reference>
<reference key="2">
    <citation type="journal article" date="2005" name="Nature">
        <title>The map-based sequence of the rice genome.</title>
        <authorList>
            <consortium name="International rice genome sequencing project (IRGSP)"/>
        </authorList>
    </citation>
    <scope>NUCLEOTIDE SEQUENCE [LARGE SCALE GENOMIC DNA]</scope>
    <source>
        <strain>cv. Nipponbare</strain>
    </source>
</reference>
<reference key="3">
    <citation type="journal article" date="2013" name="Rice">
        <title>Improvement of the Oryza sativa Nipponbare reference genome using next generation sequence and optical map data.</title>
        <authorList>
            <person name="Kawahara Y."/>
            <person name="de la Bastide M."/>
            <person name="Hamilton J.P."/>
            <person name="Kanamori H."/>
            <person name="McCombie W.R."/>
            <person name="Ouyang S."/>
            <person name="Schwartz D.C."/>
            <person name="Tanaka T."/>
            <person name="Wu J."/>
            <person name="Zhou S."/>
            <person name="Childs K.L."/>
            <person name="Davidson R.M."/>
            <person name="Lin H."/>
            <person name="Quesada-Ocampo L."/>
            <person name="Vaillancourt B."/>
            <person name="Sakai H."/>
            <person name="Lee S.S."/>
            <person name="Kim J."/>
            <person name="Numa H."/>
            <person name="Itoh T."/>
            <person name="Buell C.R."/>
            <person name="Matsumoto T."/>
        </authorList>
    </citation>
    <scope>GENOME REANNOTATION</scope>
    <source>
        <strain>cv. Nipponbare</strain>
    </source>
</reference>
<feature type="signal peptide" evidence="1">
    <location>
        <begin position="1"/>
        <end position="23"/>
    </location>
</feature>
<feature type="chain" id="PRO_0000045973" description="Putative ripening-related protein 6">
    <location>
        <begin position="24"/>
        <end position="167"/>
    </location>
</feature>
<feature type="region of interest" description="Disordered" evidence="2">
    <location>
        <begin position="28"/>
        <end position="57"/>
    </location>
</feature>
<sequence>MANAKQLALFAMLVLLLASCAAARRHGKPDPCDGGGGGVDSHLPPGMRRCSSPAVSEDGTPAVMTVNGFEEGEDGGGPAACDGRYHSDRSLVAALSTGWFAGGRRCHRGIRITSRQNGRSVVATVVDECDSRHGGCKDDIVDTSAAVWSALGLDTNVGEVPVTWSDA</sequence>
<comment type="subcellular location">
    <subcellularLocation>
        <location evidence="3">Secreted</location>
    </subcellularLocation>
</comment>
<comment type="similarity">
    <text evidence="3">Belongs to the kiwellin family.</text>
</comment>
<dbReference type="EMBL" id="AC090120">
    <property type="protein sequence ID" value="AAL31058.1"/>
    <property type="molecule type" value="Genomic_DNA"/>
</dbReference>
<dbReference type="EMBL" id="AC146481">
    <property type="protein sequence ID" value="AAR87366.1"/>
    <property type="molecule type" value="Genomic_DNA"/>
</dbReference>
<dbReference type="EMBL" id="DP000086">
    <property type="protein sequence ID" value="AAP54377.1"/>
    <property type="molecule type" value="Genomic_DNA"/>
</dbReference>
<dbReference type="EMBL" id="AP014966">
    <property type="protein sequence ID" value="BAT11414.1"/>
    <property type="molecule type" value="Genomic_DNA"/>
</dbReference>
<dbReference type="SMR" id="Q7XD66"/>
<dbReference type="FunCoup" id="Q7XD66">
    <property type="interactions" value="3"/>
</dbReference>
<dbReference type="STRING" id="39947.Q7XD66"/>
<dbReference type="PaxDb" id="39947-Q7XD66"/>
<dbReference type="EnsemblPlants" id="Os10t0489301-00">
    <property type="protein sequence ID" value="Os10t0489301-00"/>
    <property type="gene ID" value="Os10g0489301"/>
</dbReference>
<dbReference type="Gramene" id="Os10t0489301-00">
    <property type="protein sequence ID" value="Os10t0489301-00"/>
    <property type="gene ID" value="Os10g0489301"/>
</dbReference>
<dbReference type="eggNOG" id="ENOG502SCZ5">
    <property type="taxonomic scope" value="Eukaryota"/>
</dbReference>
<dbReference type="HOGENOM" id="CLU_047639_4_4_1"/>
<dbReference type="InParanoid" id="Q7XD66"/>
<dbReference type="OMA" id="HEPEDPC"/>
<dbReference type="OrthoDB" id="406505at2759"/>
<dbReference type="Proteomes" id="UP000000763">
    <property type="component" value="Chromosome 10"/>
</dbReference>
<dbReference type="Proteomes" id="UP000059680">
    <property type="component" value="Chromosome 10"/>
</dbReference>
<dbReference type="GO" id="GO:0005576">
    <property type="term" value="C:extracellular region"/>
    <property type="evidence" value="ECO:0007669"/>
    <property type="project" value="UniProtKB-SubCell"/>
</dbReference>
<dbReference type="CDD" id="cd22270">
    <property type="entry name" value="DPBB_kiwellin-like"/>
    <property type="match status" value="1"/>
</dbReference>
<dbReference type="Gene3D" id="2.40.40.10">
    <property type="entry name" value="RlpA-like domain"/>
    <property type="match status" value="1"/>
</dbReference>
<dbReference type="InterPro" id="IPR039271">
    <property type="entry name" value="Kiwellin-like"/>
</dbReference>
<dbReference type="InterPro" id="IPR036908">
    <property type="entry name" value="RlpA-like_sf"/>
</dbReference>
<dbReference type="PANTHER" id="PTHR33191">
    <property type="entry name" value="RIPENING-RELATED PROTEIN 2-RELATED"/>
    <property type="match status" value="1"/>
</dbReference>
<dbReference type="PANTHER" id="PTHR33191:SF80">
    <property type="entry name" value="RIPENING-RELATED PROTEIN 6-RELATED"/>
    <property type="match status" value="1"/>
</dbReference>
<dbReference type="Pfam" id="PF24300">
    <property type="entry name" value="KWL1"/>
    <property type="match status" value="1"/>
</dbReference>
<dbReference type="SUPFAM" id="SSF50685">
    <property type="entry name" value="Barwin-like endoglucanases"/>
    <property type="match status" value="1"/>
</dbReference>
<evidence type="ECO:0000255" key="1"/>
<evidence type="ECO:0000256" key="2">
    <source>
        <dbReference type="SAM" id="MobiDB-lite"/>
    </source>
</evidence>
<evidence type="ECO:0000305" key="3"/>
<protein>
    <recommendedName>
        <fullName>Putative ripening-related protein 6</fullName>
    </recommendedName>
</protein>
<name>RIP6_ORYSJ</name>
<organism>
    <name type="scientific">Oryza sativa subsp. japonica</name>
    <name type="common">Rice</name>
    <dbReference type="NCBI Taxonomy" id="39947"/>
    <lineage>
        <taxon>Eukaryota</taxon>
        <taxon>Viridiplantae</taxon>
        <taxon>Streptophyta</taxon>
        <taxon>Embryophyta</taxon>
        <taxon>Tracheophyta</taxon>
        <taxon>Spermatophyta</taxon>
        <taxon>Magnoliopsida</taxon>
        <taxon>Liliopsida</taxon>
        <taxon>Poales</taxon>
        <taxon>Poaceae</taxon>
        <taxon>BOP clade</taxon>
        <taxon>Oryzoideae</taxon>
        <taxon>Oryzeae</taxon>
        <taxon>Oryzinae</taxon>
        <taxon>Oryza</taxon>
        <taxon>Oryza sativa</taxon>
    </lineage>
</organism>
<accession>Q7XD66</accession>
<accession>A0A0P0XW59</accession>
<accession>Q8W5J4</accession>
<proteinExistence type="inferred from homology"/>
<gene>
    <name type="ordered locus">Os10g0489301</name>
    <name type="ordered locus">Os10g0489300</name>
    <name type="ordered locus">LOC_Os10g34760</name>
    <name type="ORF">B1288B10.4</name>
    <name type="ORF">OSJNBb0049A16.9</name>
</gene>